<comment type="caution">
    <text evidence="2">Product of a dubious gene prediction unlikely to encode a functional protein. Because of that it is not part of the S.cerevisiae S288c complete/reference proteome set.</text>
</comment>
<feature type="signal peptide" evidence="1">
    <location>
        <begin position="1"/>
        <end position="19"/>
    </location>
</feature>
<feature type="chain" id="PRO_0000309016" description="Putative uncharacterized protein YDL240C-A">
    <location>
        <begin position="20"/>
        <end position="45"/>
    </location>
</feature>
<dbReference type="EMBL" id="Z74288">
    <property type="status" value="NOT_ANNOTATED_CDS"/>
    <property type="molecule type" value="Genomic_DNA"/>
</dbReference>
<dbReference type="EMBL" id="Z74289">
    <property type="status" value="NOT_ANNOTATED_CDS"/>
    <property type="molecule type" value="Genomic_DNA"/>
</dbReference>
<dbReference type="STRING" id="4932.YDL240C-A"/>
<dbReference type="PaxDb" id="4932-YDL240C-A"/>
<dbReference type="EnsemblFungi" id="YDL240C-A_mRNA">
    <property type="protein sequence ID" value="YDL240C-A"/>
    <property type="gene ID" value="YDL240C-A"/>
</dbReference>
<dbReference type="AGR" id="SGD:S000007601"/>
<dbReference type="SGD" id="S000007601">
    <property type="gene designation" value="YDL240C-A"/>
</dbReference>
<dbReference type="HOGENOM" id="CLU_3207875_0_0_1"/>
<sequence>MTFQILFLFVFHFVYIFRAHQYPAYFEDEKDTYIKIRIYSPRSIS</sequence>
<evidence type="ECO:0000255" key="1"/>
<evidence type="ECO:0000305" key="2">
    <source>
    </source>
</evidence>
<name>YD240_YEAST</name>
<organism>
    <name type="scientific">Saccharomyces cerevisiae (strain ATCC 204508 / S288c)</name>
    <name type="common">Baker's yeast</name>
    <dbReference type="NCBI Taxonomy" id="559292"/>
    <lineage>
        <taxon>Eukaryota</taxon>
        <taxon>Fungi</taxon>
        <taxon>Dikarya</taxon>
        <taxon>Ascomycota</taxon>
        <taxon>Saccharomycotina</taxon>
        <taxon>Saccharomycetes</taxon>
        <taxon>Saccharomycetales</taxon>
        <taxon>Saccharomycetaceae</taxon>
        <taxon>Saccharomyces</taxon>
    </lineage>
</organism>
<accession>P0C5L8</accession>
<gene>
    <name type="ordered locus">YDL240C-A</name>
</gene>
<keyword id="KW-0732">Signal</keyword>
<reference key="1">
    <citation type="journal article" date="1997" name="Nature">
        <title>The nucleotide sequence of Saccharomyces cerevisiae chromosome IV.</title>
        <authorList>
            <person name="Jacq C."/>
            <person name="Alt-Moerbe J."/>
            <person name="Andre B."/>
            <person name="Arnold W."/>
            <person name="Bahr A."/>
            <person name="Ballesta J.P.G."/>
            <person name="Bargues M."/>
            <person name="Baron L."/>
            <person name="Becker A."/>
            <person name="Biteau N."/>
            <person name="Bloecker H."/>
            <person name="Blugeon C."/>
            <person name="Boskovic J."/>
            <person name="Brandt P."/>
            <person name="Brueckner M."/>
            <person name="Buitrago M.J."/>
            <person name="Coster F."/>
            <person name="Delaveau T."/>
            <person name="del Rey F."/>
            <person name="Dujon B."/>
            <person name="Eide L.G."/>
            <person name="Garcia-Cantalejo J.M."/>
            <person name="Goffeau A."/>
            <person name="Gomez-Peris A."/>
            <person name="Granotier C."/>
            <person name="Hanemann V."/>
            <person name="Hankeln T."/>
            <person name="Hoheisel J.D."/>
            <person name="Jaeger W."/>
            <person name="Jimenez A."/>
            <person name="Jonniaux J.-L."/>
            <person name="Kraemer C."/>
            <person name="Kuester H."/>
            <person name="Laamanen P."/>
            <person name="Legros Y."/>
            <person name="Louis E.J."/>
            <person name="Moeller-Rieker S."/>
            <person name="Monnet A."/>
            <person name="Moro M."/>
            <person name="Mueller-Auer S."/>
            <person name="Nussbaumer B."/>
            <person name="Paricio N."/>
            <person name="Paulin L."/>
            <person name="Perea J."/>
            <person name="Perez-Alonso M."/>
            <person name="Perez-Ortin J.E."/>
            <person name="Pohl T.M."/>
            <person name="Prydz H."/>
            <person name="Purnelle B."/>
            <person name="Rasmussen S.W."/>
            <person name="Remacha M.A."/>
            <person name="Revuelta J.L."/>
            <person name="Rieger M."/>
            <person name="Salom D."/>
            <person name="Saluz H.P."/>
            <person name="Saiz J.E."/>
            <person name="Saren A.-M."/>
            <person name="Schaefer M."/>
            <person name="Scharfe M."/>
            <person name="Schmidt E.R."/>
            <person name="Schneider C."/>
            <person name="Scholler P."/>
            <person name="Schwarz S."/>
            <person name="Soler-Mira A."/>
            <person name="Urrestarazu L.A."/>
            <person name="Verhasselt P."/>
            <person name="Vissers S."/>
            <person name="Voet M."/>
            <person name="Volckaert G."/>
            <person name="Wagner G."/>
            <person name="Wambutt R."/>
            <person name="Wedler E."/>
            <person name="Wedler H."/>
            <person name="Woelfl S."/>
            <person name="Harris D.E."/>
            <person name="Bowman S."/>
            <person name="Brown D."/>
            <person name="Churcher C.M."/>
            <person name="Connor R."/>
            <person name="Dedman K."/>
            <person name="Gentles S."/>
            <person name="Hamlin N."/>
            <person name="Hunt S."/>
            <person name="Jones L."/>
            <person name="McDonald S."/>
            <person name="Murphy L.D."/>
            <person name="Niblett D."/>
            <person name="Odell C."/>
            <person name="Oliver K."/>
            <person name="Rajandream M.A."/>
            <person name="Richards C."/>
            <person name="Shore L."/>
            <person name="Walsh S.V."/>
            <person name="Barrell B.G."/>
            <person name="Dietrich F.S."/>
            <person name="Mulligan J.T."/>
            <person name="Allen E."/>
            <person name="Araujo R."/>
            <person name="Aviles E."/>
            <person name="Berno A."/>
            <person name="Carpenter J."/>
            <person name="Chen E."/>
            <person name="Cherry J.M."/>
            <person name="Chung E."/>
            <person name="Duncan M."/>
            <person name="Hunicke-Smith S."/>
            <person name="Hyman R.W."/>
            <person name="Komp C."/>
            <person name="Lashkari D."/>
            <person name="Lew H."/>
            <person name="Lin D."/>
            <person name="Mosedale D."/>
            <person name="Nakahara K."/>
            <person name="Namath A."/>
            <person name="Oefner P."/>
            <person name="Oh C."/>
            <person name="Petel F.X."/>
            <person name="Roberts D."/>
            <person name="Schramm S."/>
            <person name="Schroeder M."/>
            <person name="Shogren T."/>
            <person name="Shroff N."/>
            <person name="Winant A."/>
            <person name="Yelton M.A."/>
            <person name="Botstein D."/>
            <person name="Davis R.W."/>
            <person name="Johnston M."/>
            <person name="Andrews S."/>
            <person name="Brinkman R."/>
            <person name="Cooper J."/>
            <person name="Ding H."/>
            <person name="Du Z."/>
            <person name="Favello A."/>
            <person name="Fulton L."/>
            <person name="Gattung S."/>
            <person name="Greco T."/>
            <person name="Hallsworth K."/>
            <person name="Hawkins J."/>
            <person name="Hillier L.W."/>
            <person name="Jier M."/>
            <person name="Johnson D."/>
            <person name="Johnston L."/>
            <person name="Kirsten J."/>
            <person name="Kucaba T."/>
            <person name="Langston Y."/>
            <person name="Latreille P."/>
            <person name="Le T."/>
            <person name="Mardis E."/>
            <person name="Menezes S."/>
            <person name="Miller N."/>
            <person name="Nhan M."/>
            <person name="Pauley A."/>
            <person name="Peluso D."/>
            <person name="Rifkin L."/>
            <person name="Riles L."/>
            <person name="Taich A."/>
            <person name="Trevaskis E."/>
            <person name="Vignati D."/>
            <person name="Wilcox L."/>
            <person name="Wohldman P."/>
            <person name="Vaudin M."/>
            <person name="Wilson R."/>
            <person name="Waterston R."/>
            <person name="Albermann K."/>
            <person name="Hani J."/>
            <person name="Heumann K."/>
            <person name="Kleine K."/>
            <person name="Mewes H.-W."/>
            <person name="Zollner A."/>
            <person name="Zaccaria P."/>
        </authorList>
    </citation>
    <scope>NUCLEOTIDE SEQUENCE [LARGE SCALE GENOMIC DNA]</scope>
    <source>
        <strain>ATCC 204508 / S288c</strain>
    </source>
</reference>
<reference key="2">
    <citation type="journal article" date="2014" name="G3 (Bethesda)">
        <title>The reference genome sequence of Saccharomyces cerevisiae: Then and now.</title>
        <authorList>
            <person name="Engel S.R."/>
            <person name="Dietrich F.S."/>
            <person name="Fisk D.G."/>
            <person name="Binkley G."/>
            <person name="Balakrishnan R."/>
            <person name="Costanzo M.C."/>
            <person name="Dwight S.S."/>
            <person name="Hitz B.C."/>
            <person name="Karra K."/>
            <person name="Nash R.S."/>
            <person name="Weng S."/>
            <person name="Wong E.D."/>
            <person name="Lloyd P."/>
            <person name="Skrzypek M.S."/>
            <person name="Miyasato S.R."/>
            <person name="Simison M."/>
            <person name="Cherry J.M."/>
        </authorList>
    </citation>
    <scope>GENOME REANNOTATION</scope>
    <source>
        <strain>ATCC 204508 / S288c</strain>
    </source>
</reference>
<reference key="3">
    <citation type="journal article" date="2000" name="FEBS Lett.">
        <title>Genomic exploration of the hemiascomycetous yeasts: 4. The genome of Saccharomyces cerevisiae revisited.</title>
        <authorList>
            <person name="Blandin G."/>
            <person name="Durrens P."/>
            <person name="Tekaia F."/>
            <person name="Aigle M."/>
            <person name="Bolotin-Fukuhara M."/>
            <person name="Bon E."/>
            <person name="Casaregola S."/>
            <person name="de Montigny J."/>
            <person name="Gaillardin C."/>
            <person name="Lepingle A."/>
            <person name="Llorente B."/>
            <person name="Malpertuy A."/>
            <person name="Neuveglise C."/>
            <person name="Ozier-Kalogeropoulos O."/>
            <person name="Perrin A."/>
            <person name="Potier S."/>
            <person name="Souciet J.-L."/>
            <person name="Talla E."/>
            <person name="Toffano-Nioche C."/>
            <person name="Wesolowski-Louvel M."/>
            <person name="Marck C."/>
            <person name="Dujon B."/>
        </authorList>
    </citation>
    <scope>GENOME REANNOTATION</scope>
</reference>
<protein>
    <recommendedName>
        <fullName>Putative uncharacterized protein YDL240C-A</fullName>
    </recommendedName>
</protein>
<proteinExistence type="uncertain"/>